<reference key="1">
    <citation type="journal article" date="2005" name="Science">
        <title>The transcriptional landscape of the mammalian genome.</title>
        <authorList>
            <person name="Carninci P."/>
            <person name="Kasukawa T."/>
            <person name="Katayama S."/>
            <person name="Gough J."/>
            <person name="Frith M.C."/>
            <person name="Maeda N."/>
            <person name="Oyama R."/>
            <person name="Ravasi T."/>
            <person name="Lenhard B."/>
            <person name="Wells C."/>
            <person name="Kodzius R."/>
            <person name="Shimokawa K."/>
            <person name="Bajic V.B."/>
            <person name="Brenner S.E."/>
            <person name="Batalov S."/>
            <person name="Forrest A.R."/>
            <person name="Zavolan M."/>
            <person name="Davis M.J."/>
            <person name="Wilming L.G."/>
            <person name="Aidinis V."/>
            <person name="Allen J.E."/>
            <person name="Ambesi-Impiombato A."/>
            <person name="Apweiler R."/>
            <person name="Aturaliya R.N."/>
            <person name="Bailey T.L."/>
            <person name="Bansal M."/>
            <person name="Baxter L."/>
            <person name="Beisel K.W."/>
            <person name="Bersano T."/>
            <person name="Bono H."/>
            <person name="Chalk A.M."/>
            <person name="Chiu K.P."/>
            <person name="Choudhary V."/>
            <person name="Christoffels A."/>
            <person name="Clutterbuck D.R."/>
            <person name="Crowe M.L."/>
            <person name="Dalla E."/>
            <person name="Dalrymple B.P."/>
            <person name="de Bono B."/>
            <person name="Della Gatta G."/>
            <person name="di Bernardo D."/>
            <person name="Down T."/>
            <person name="Engstrom P."/>
            <person name="Fagiolini M."/>
            <person name="Faulkner G."/>
            <person name="Fletcher C.F."/>
            <person name="Fukushima T."/>
            <person name="Furuno M."/>
            <person name="Futaki S."/>
            <person name="Gariboldi M."/>
            <person name="Georgii-Hemming P."/>
            <person name="Gingeras T.R."/>
            <person name="Gojobori T."/>
            <person name="Green R.E."/>
            <person name="Gustincich S."/>
            <person name="Harbers M."/>
            <person name="Hayashi Y."/>
            <person name="Hensch T.K."/>
            <person name="Hirokawa N."/>
            <person name="Hill D."/>
            <person name="Huminiecki L."/>
            <person name="Iacono M."/>
            <person name="Ikeo K."/>
            <person name="Iwama A."/>
            <person name="Ishikawa T."/>
            <person name="Jakt M."/>
            <person name="Kanapin A."/>
            <person name="Katoh M."/>
            <person name="Kawasawa Y."/>
            <person name="Kelso J."/>
            <person name="Kitamura H."/>
            <person name="Kitano H."/>
            <person name="Kollias G."/>
            <person name="Krishnan S.P."/>
            <person name="Kruger A."/>
            <person name="Kummerfeld S.K."/>
            <person name="Kurochkin I.V."/>
            <person name="Lareau L.F."/>
            <person name="Lazarevic D."/>
            <person name="Lipovich L."/>
            <person name="Liu J."/>
            <person name="Liuni S."/>
            <person name="McWilliam S."/>
            <person name="Madan Babu M."/>
            <person name="Madera M."/>
            <person name="Marchionni L."/>
            <person name="Matsuda H."/>
            <person name="Matsuzawa S."/>
            <person name="Miki H."/>
            <person name="Mignone F."/>
            <person name="Miyake S."/>
            <person name="Morris K."/>
            <person name="Mottagui-Tabar S."/>
            <person name="Mulder N."/>
            <person name="Nakano N."/>
            <person name="Nakauchi H."/>
            <person name="Ng P."/>
            <person name="Nilsson R."/>
            <person name="Nishiguchi S."/>
            <person name="Nishikawa S."/>
            <person name="Nori F."/>
            <person name="Ohara O."/>
            <person name="Okazaki Y."/>
            <person name="Orlando V."/>
            <person name="Pang K.C."/>
            <person name="Pavan W.J."/>
            <person name="Pavesi G."/>
            <person name="Pesole G."/>
            <person name="Petrovsky N."/>
            <person name="Piazza S."/>
            <person name="Reed J."/>
            <person name="Reid J.F."/>
            <person name="Ring B.Z."/>
            <person name="Ringwald M."/>
            <person name="Rost B."/>
            <person name="Ruan Y."/>
            <person name="Salzberg S.L."/>
            <person name="Sandelin A."/>
            <person name="Schneider C."/>
            <person name="Schoenbach C."/>
            <person name="Sekiguchi K."/>
            <person name="Semple C.A."/>
            <person name="Seno S."/>
            <person name="Sessa L."/>
            <person name="Sheng Y."/>
            <person name="Shibata Y."/>
            <person name="Shimada H."/>
            <person name="Shimada K."/>
            <person name="Silva D."/>
            <person name="Sinclair B."/>
            <person name="Sperling S."/>
            <person name="Stupka E."/>
            <person name="Sugiura K."/>
            <person name="Sultana R."/>
            <person name="Takenaka Y."/>
            <person name="Taki K."/>
            <person name="Tammoja K."/>
            <person name="Tan S.L."/>
            <person name="Tang S."/>
            <person name="Taylor M.S."/>
            <person name="Tegner J."/>
            <person name="Teichmann S.A."/>
            <person name="Ueda H.R."/>
            <person name="van Nimwegen E."/>
            <person name="Verardo R."/>
            <person name="Wei C.L."/>
            <person name="Yagi K."/>
            <person name="Yamanishi H."/>
            <person name="Zabarovsky E."/>
            <person name="Zhu S."/>
            <person name="Zimmer A."/>
            <person name="Hide W."/>
            <person name="Bult C."/>
            <person name="Grimmond S.M."/>
            <person name="Teasdale R.D."/>
            <person name="Liu E.T."/>
            <person name="Brusic V."/>
            <person name="Quackenbush J."/>
            <person name="Wahlestedt C."/>
            <person name="Mattick J.S."/>
            <person name="Hume D.A."/>
            <person name="Kai C."/>
            <person name="Sasaki D."/>
            <person name="Tomaru Y."/>
            <person name="Fukuda S."/>
            <person name="Kanamori-Katayama M."/>
            <person name="Suzuki M."/>
            <person name="Aoki J."/>
            <person name="Arakawa T."/>
            <person name="Iida J."/>
            <person name="Imamura K."/>
            <person name="Itoh M."/>
            <person name="Kato T."/>
            <person name="Kawaji H."/>
            <person name="Kawagashira N."/>
            <person name="Kawashima T."/>
            <person name="Kojima M."/>
            <person name="Kondo S."/>
            <person name="Konno H."/>
            <person name="Nakano K."/>
            <person name="Ninomiya N."/>
            <person name="Nishio T."/>
            <person name="Okada M."/>
            <person name="Plessy C."/>
            <person name="Shibata K."/>
            <person name="Shiraki T."/>
            <person name="Suzuki S."/>
            <person name="Tagami M."/>
            <person name="Waki K."/>
            <person name="Watahiki A."/>
            <person name="Okamura-Oho Y."/>
            <person name="Suzuki H."/>
            <person name="Kawai J."/>
            <person name="Hayashizaki Y."/>
        </authorList>
    </citation>
    <scope>NUCLEOTIDE SEQUENCE [LARGE SCALE MRNA] (ISOFORM 2)</scope>
    <source>
        <strain>C57BL/6J</strain>
        <tissue>Visual cortex</tissue>
    </source>
</reference>
<reference key="2">
    <citation type="journal article" date="2004" name="Genome Res.">
        <title>The status, quality, and expansion of the NIH full-length cDNA project: the Mammalian Gene Collection (MGC).</title>
        <authorList>
            <consortium name="The MGC Project Team"/>
        </authorList>
    </citation>
    <scope>NUCLEOTIDE SEQUENCE [LARGE SCALE MRNA] (ISOFORM 1)</scope>
    <source>
        <strain>C57BL/6J</strain>
        <tissue>Eye</tissue>
    </source>
</reference>
<reference key="3">
    <citation type="journal article" date="2014" name="Genes Cells">
        <title>Identification and characterization of a neuron-specific isoform of protrudin.</title>
        <authorList>
            <person name="Ohnishi T."/>
            <person name="Shirane M."/>
            <person name="Hashimoto Y."/>
            <person name="Saita S."/>
            <person name="Nakayama K.I."/>
        </authorList>
    </citation>
    <scope>NUCLEOTIDE SEQUENCE [MRNA] (ISOFORMS 1 AND 2)</scope>
    <scope>FUNCTION</scope>
    <scope>INTERACTION WITH VAPA; VAPB AND KIF5A</scope>
    <scope>TISSUE SPECIFICITY</scope>
</reference>
<reference key="4">
    <citation type="journal article" date="2006" name="Science">
        <title>Protrudin induces neurite formation by directional membrane trafficking.</title>
        <authorList>
            <person name="Shirane M."/>
            <person name="Nakayama K.I."/>
        </authorList>
    </citation>
    <scope>SUBCELLULAR LOCATION</scope>
    <scope>TISSUE SPECIFICITY</scope>
</reference>
<reference key="5">
    <citation type="journal article" date="2008" name="Genes Cells">
        <title>Regulation of apoptosis and neurite extension by FKBP38 is required for neural tube formation in the mouse.</title>
        <authorList>
            <person name="Shirane M."/>
            <person name="Ogawa M."/>
            <person name="Motoyama J."/>
            <person name="Nakayama K.I."/>
        </authorList>
    </citation>
    <scope>PHOSPHORYLATION</scope>
</reference>
<reference key="6">
    <citation type="journal article" date="2011" name="Mol. Biol. Cell">
        <title>Protrudin serves as an adaptor molecule that connects KIF5 and its cargoes in vesicular transport during process formation.</title>
        <authorList>
            <person name="Matsuzaki F."/>
            <person name="Shirane M."/>
            <person name="Matsumoto M."/>
            <person name="Nakayama K.I."/>
        </authorList>
    </citation>
    <scope>FUNCTION</scope>
    <scope>INTERACTION WITH RAB11A; RAB11B; SURF4; KIF5A; KIF5B AND KIF5C</scope>
</reference>
<reference key="7">
    <citation type="journal article" date="2014" name="J. Biol. Chem.">
        <title>Protrudin regulates endoplasmic reticulum morphology and function associated with the pathogenesis of hereditary spastic paraplegia.</title>
        <authorList>
            <person name="Hashimoto Y."/>
            <person name="Shirane M."/>
            <person name="Matsuzaki F."/>
            <person name="Saita S."/>
            <person name="Ohnishi T."/>
            <person name="Nakayama K.I."/>
        </authorList>
    </citation>
    <scope>SUBCELLULAR LOCATION</scope>
    <scope>TOPOLOGY</scope>
    <scope>INTERACTION WITH REEP1; REEP5 AND ATL1</scope>
</reference>
<organism>
    <name type="scientific">Mus musculus</name>
    <name type="common">Mouse</name>
    <dbReference type="NCBI Taxonomy" id="10090"/>
    <lineage>
        <taxon>Eukaryota</taxon>
        <taxon>Metazoa</taxon>
        <taxon>Chordata</taxon>
        <taxon>Craniata</taxon>
        <taxon>Vertebrata</taxon>
        <taxon>Euteleostomi</taxon>
        <taxon>Mammalia</taxon>
        <taxon>Eutheria</taxon>
        <taxon>Euarchontoglires</taxon>
        <taxon>Glires</taxon>
        <taxon>Rodentia</taxon>
        <taxon>Myomorpha</taxon>
        <taxon>Muroidea</taxon>
        <taxon>Muridae</taxon>
        <taxon>Murinae</taxon>
        <taxon>Mus</taxon>
        <taxon>Mus</taxon>
    </lineage>
</organism>
<dbReference type="EMBL" id="AK159065">
    <property type="protein sequence ID" value="BAE34791.1"/>
    <property type="molecule type" value="mRNA"/>
</dbReference>
<dbReference type="EMBL" id="BC042595">
    <property type="protein sequence ID" value="AAH42595.1"/>
    <property type="status" value="ALT_INIT"/>
    <property type="molecule type" value="mRNA"/>
</dbReference>
<dbReference type="CCDS" id="CCDS29825.2">
    <molecule id="Q3TXX3-1"/>
</dbReference>
<dbReference type="CCDS" id="CCDS50440.1">
    <molecule id="Q3TXX3-2"/>
</dbReference>
<dbReference type="RefSeq" id="NP_001158003.1">
    <molecule id="Q3TXX3-2"/>
    <property type="nucleotide sequence ID" value="NM_001164531.1"/>
</dbReference>
<dbReference type="RefSeq" id="NP_796293.2">
    <molecule id="Q3TXX3-1"/>
    <property type="nucleotide sequence ID" value="NM_177319.3"/>
</dbReference>
<dbReference type="SMR" id="Q3TXX3"/>
<dbReference type="CORUM" id="Q3TXX3"/>
<dbReference type="FunCoup" id="Q3TXX3">
    <property type="interactions" value="2173"/>
</dbReference>
<dbReference type="IntAct" id="Q3TXX3">
    <property type="interactions" value="1"/>
</dbReference>
<dbReference type="STRING" id="10090.ENSMUSP00000130684"/>
<dbReference type="GlyGen" id="Q3TXX3">
    <property type="glycosylation" value="1 site"/>
</dbReference>
<dbReference type="iPTMnet" id="Q3TXX3"/>
<dbReference type="PhosphoSitePlus" id="Q3TXX3"/>
<dbReference type="SwissPalm" id="Q3TXX3"/>
<dbReference type="PaxDb" id="10090-ENSMUSP00000130684"/>
<dbReference type="PeptideAtlas" id="Q3TXX3"/>
<dbReference type="ProteomicsDB" id="299557">
    <molecule id="Q3TXX3-1"/>
</dbReference>
<dbReference type="ProteomicsDB" id="299558">
    <molecule id="Q3TXX3-2"/>
</dbReference>
<dbReference type="Pumba" id="Q3TXX3"/>
<dbReference type="Antibodypedia" id="17359">
    <property type="antibodies" value="182 antibodies from 25 providers"/>
</dbReference>
<dbReference type="DNASU" id="319740"/>
<dbReference type="Ensembl" id="ENSMUST00000099443.11">
    <molecule id="Q3TXX3-2"/>
    <property type="protein sequence ID" value="ENSMUSP00000097042.5"/>
    <property type="gene ID" value="ENSMUSG00000018820.14"/>
</dbReference>
<dbReference type="Ensembl" id="ENSMUST00000169536.8">
    <molecule id="Q3TXX3-1"/>
    <property type="protein sequence ID" value="ENSMUSP00000130684.2"/>
    <property type="gene ID" value="ENSMUSG00000018820.14"/>
</dbReference>
<dbReference type="GeneID" id="319740"/>
<dbReference type="KEGG" id="mmu:319740"/>
<dbReference type="UCSC" id="uc008hnj.2">
    <molecule id="Q3TXX3-2"/>
    <property type="organism name" value="mouse"/>
</dbReference>
<dbReference type="UCSC" id="uc012blu.1">
    <molecule id="Q3TXX3-1"/>
    <property type="organism name" value="mouse"/>
</dbReference>
<dbReference type="AGR" id="MGI:1919602"/>
<dbReference type="CTD" id="118813"/>
<dbReference type="MGI" id="MGI:1919602">
    <property type="gene designation" value="Zfyve27"/>
</dbReference>
<dbReference type="VEuPathDB" id="HostDB:ENSMUSG00000018820"/>
<dbReference type="eggNOG" id="ENOG502QVKC">
    <property type="taxonomic scope" value="Eukaryota"/>
</dbReference>
<dbReference type="GeneTree" id="ENSGT00390000013298"/>
<dbReference type="HOGENOM" id="CLU_060341_0_0_1"/>
<dbReference type="InParanoid" id="Q3TXX3"/>
<dbReference type="OMA" id="LYWEDHS"/>
<dbReference type="OrthoDB" id="5975347at2759"/>
<dbReference type="PhylomeDB" id="Q3TXX3"/>
<dbReference type="TreeFam" id="TF331044"/>
<dbReference type="BioGRID-ORCS" id="319740">
    <property type="hits" value="3 hits in 79 CRISPR screens"/>
</dbReference>
<dbReference type="ChiTaRS" id="Zfyve27">
    <property type="organism name" value="mouse"/>
</dbReference>
<dbReference type="PRO" id="PR:Q3TXX3"/>
<dbReference type="Proteomes" id="UP000000589">
    <property type="component" value="Chromosome 19"/>
</dbReference>
<dbReference type="RNAct" id="Q3TXX3">
    <property type="molecule type" value="protein"/>
</dbReference>
<dbReference type="Bgee" id="ENSMUSG00000018820">
    <property type="expression patterns" value="Expressed in granulocyte and 256 other cell types or tissues"/>
</dbReference>
<dbReference type="ExpressionAtlas" id="Q3TXX3">
    <property type="expression patterns" value="baseline and differential"/>
</dbReference>
<dbReference type="GO" id="GO:0030424">
    <property type="term" value="C:axon"/>
    <property type="evidence" value="ECO:0000314"/>
    <property type="project" value="UniProtKB"/>
</dbReference>
<dbReference type="GO" id="GO:0005737">
    <property type="term" value="C:cytoplasm"/>
    <property type="evidence" value="ECO:0000314"/>
    <property type="project" value="UniProtKB"/>
</dbReference>
<dbReference type="GO" id="GO:0005829">
    <property type="term" value="C:cytosol"/>
    <property type="evidence" value="ECO:0007669"/>
    <property type="project" value="Ensembl"/>
</dbReference>
<dbReference type="GO" id="GO:0030425">
    <property type="term" value="C:dendrite"/>
    <property type="evidence" value="ECO:0000314"/>
    <property type="project" value="UniProtKB"/>
</dbReference>
<dbReference type="GO" id="GO:0005783">
    <property type="term" value="C:endoplasmic reticulum"/>
    <property type="evidence" value="ECO:0000250"/>
    <property type="project" value="UniProtKB"/>
</dbReference>
<dbReference type="GO" id="GO:0005789">
    <property type="term" value="C:endoplasmic reticulum membrane"/>
    <property type="evidence" value="ECO:0000250"/>
    <property type="project" value="UniProtKB"/>
</dbReference>
<dbReference type="GO" id="GO:0071782">
    <property type="term" value="C:endoplasmic reticulum tubular network"/>
    <property type="evidence" value="ECO:0000314"/>
    <property type="project" value="UniProtKB"/>
</dbReference>
<dbReference type="GO" id="GO:0032584">
    <property type="term" value="C:growth cone membrane"/>
    <property type="evidence" value="ECO:0000314"/>
    <property type="project" value="UniProtKB"/>
</dbReference>
<dbReference type="GO" id="GO:0016020">
    <property type="term" value="C:membrane"/>
    <property type="evidence" value="ECO:0000314"/>
    <property type="project" value="UniProtKB"/>
</dbReference>
<dbReference type="GO" id="GO:0005654">
    <property type="term" value="C:nucleoplasm"/>
    <property type="evidence" value="ECO:0007669"/>
    <property type="project" value="Ensembl"/>
</dbReference>
<dbReference type="GO" id="GO:0055038">
    <property type="term" value="C:recycling endosome membrane"/>
    <property type="evidence" value="ECO:0000250"/>
    <property type="project" value="UniProtKB"/>
</dbReference>
<dbReference type="GO" id="GO:0042802">
    <property type="term" value="F:identical protein binding"/>
    <property type="evidence" value="ECO:0007669"/>
    <property type="project" value="Ensembl"/>
</dbReference>
<dbReference type="GO" id="GO:0008270">
    <property type="term" value="F:zinc ion binding"/>
    <property type="evidence" value="ECO:0007669"/>
    <property type="project" value="UniProtKB-KW"/>
</dbReference>
<dbReference type="GO" id="GO:0071787">
    <property type="term" value="P:endoplasmic reticulum tubular network formation"/>
    <property type="evidence" value="ECO:0000250"/>
    <property type="project" value="UniProtKB"/>
</dbReference>
<dbReference type="GO" id="GO:0031175">
    <property type="term" value="P:neuron projection development"/>
    <property type="evidence" value="ECO:0000250"/>
    <property type="project" value="UniProtKB"/>
</dbReference>
<dbReference type="GO" id="GO:0048011">
    <property type="term" value="P:neurotrophin TRK receptor signaling pathway"/>
    <property type="evidence" value="ECO:0000250"/>
    <property type="project" value="UniProtKB"/>
</dbReference>
<dbReference type="GO" id="GO:0045773">
    <property type="term" value="P:positive regulation of axon extension"/>
    <property type="evidence" value="ECO:0000315"/>
    <property type="project" value="UniProtKB"/>
</dbReference>
<dbReference type="GO" id="GO:0072659">
    <property type="term" value="P:protein localization to plasma membrane"/>
    <property type="evidence" value="ECO:0000250"/>
    <property type="project" value="UniProtKB"/>
</dbReference>
<dbReference type="GO" id="GO:0016192">
    <property type="term" value="P:vesicle-mediated transport"/>
    <property type="evidence" value="ECO:0000314"/>
    <property type="project" value="UniProtKB"/>
</dbReference>
<dbReference type="CDD" id="cd15723">
    <property type="entry name" value="FYVE_protrudin"/>
    <property type="match status" value="1"/>
</dbReference>
<dbReference type="FunFam" id="3.30.40.10:FF:000102">
    <property type="entry name" value="protrudin isoform X2"/>
    <property type="match status" value="1"/>
</dbReference>
<dbReference type="Gene3D" id="3.30.40.10">
    <property type="entry name" value="Zinc/RING finger domain, C3HC4 (zinc finger)"/>
    <property type="match status" value="1"/>
</dbReference>
<dbReference type="InterPro" id="IPR042405">
    <property type="entry name" value="Protrudin"/>
</dbReference>
<dbReference type="InterPro" id="IPR000306">
    <property type="entry name" value="Znf_FYVE"/>
</dbReference>
<dbReference type="InterPro" id="IPR017455">
    <property type="entry name" value="Znf_FYVE-rel"/>
</dbReference>
<dbReference type="InterPro" id="IPR011011">
    <property type="entry name" value="Znf_FYVE_PHD"/>
</dbReference>
<dbReference type="InterPro" id="IPR013083">
    <property type="entry name" value="Znf_RING/FYVE/PHD"/>
</dbReference>
<dbReference type="PANTHER" id="PTHR14543">
    <property type="entry name" value="PROTRUDIN"/>
    <property type="match status" value="1"/>
</dbReference>
<dbReference type="PANTHER" id="PTHR14543:SF1">
    <property type="entry name" value="PROTRUDIN"/>
    <property type="match status" value="1"/>
</dbReference>
<dbReference type="Pfam" id="PF01363">
    <property type="entry name" value="FYVE"/>
    <property type="match status" value="1"/>
</dbReference>
<dbReference type="SMART" id="SM00064">
    <property type="entry name" value="FYVE"/>
    <property type="match status" value="1"/>
</dbReference>
<dbReference type="SUPFAM" id="SSF57903">
    <property type="entry name" value="FYVE/PHD zinc finger"/>
    <property type="match status" value="1"/>
</dbReference>
<dbReference type="PROSITE" id="PS50178">
    <property type="entry name" value="ZF_FYVE"/>
    <property type="match status" value="1"/>
</dbReference>
<keyword id="KW-0025">Alternative splicing</keyword>
<keyword id="KW-1003">Cell membrane</keyword>
<keyword id="KW-0966">Cell projection</keyword>
<keyword id="KW-0256">Endoplasmic reticulum</keyword>
<keyword id="KW-0967">Endosome</keyword>
<keyword id="KW-0472">Membrane</keyword>
<keyword id="KW-0479">Metal-binding</keyword>
<keyword id="KW-0597">Phosphoprotein</keyword>
<keyword id="KW-1185">Reference proteome</keyword>
<keyword id="KW-0812">Transmembrane</keyword>
<keyword id="KW-1133">Transmembrane helix</keyword>
<keyword id="KW-0862">Zinc</keyword>
<keyword id="KW-0863">Zinc-finger</keyword>
<gene>
    <name type="primary">Zfyve27</name>
</gene>
<proteinExistence type="evidence at protein level"/>
<sequence>MQTSDRDLSGPEASPSGMPEVLSECPPAPTKSAAFDLFNLVLSYKRLEIYLEPLKDAGDGVRYLLRWQMPLCSLLTCLGLNILFLTLNEGAWYSMGALMISVPALLGYLQEVCRGQLPESELMRRKYHSIRQEDLQRVRLSRVHLSRPEAVAEVKSFLIQLEAFLARLCYTCESAYRVLHWENPVVSSQFYGALLGMVCMLYLLPLCWVLALLNSTLFLGNGDFFRVVCEYRACLQRRMNPRQEECACESSALQGAGGRGLLDSSPAPTPTEDLTPGSVEEAEEAEPDEEFKDAIEETHLVVLEDEEGTPCPAEDELTLQDNGFLSKNEVLRSKVSRLTERLRKRYPTNNFGNCAGCAATFSVLKKRRSCSNCGNSFCSRCCSFKVPRSSMGATAPEAQRETVCVCASCNQTLSK</sequence>
<accession>Q3TXX3</accession>
<accession>Q8CFP8</accession>
<protein>
    <recommendedName>
        <fullName>Protrudin</fullName>
    </recommendedName>
    <alternativeName>
        <fullName>Zinc finger FYVE domain-containing protein 27</fullName>
    </alternativeName>
</protein>
<feature type="chain" id="PRO_0000245602" description="Protrudin">
    <location>
        <begin position="1"/>
        <end position="415"/>
    </location>
</feature>
<feature type="topological domain" description="Cytoplasmic" evidence="9">
    <location>
        <begin position="1"/>
        <end position="66"/>
    </location>
</feature>
<feature type="transmembrane region" description="Helical" evidence="3">
    <location>
        <begin position="67"/>
        <end position="87"/>
    </location>
</feature>
<feature type="topological domain" description="Lumenal" evidence="9">
    <location>
        <position position="88"/>
    </location>
</feature>
<feature type="transmembrane region" description="Helical" evidence="3">
    <location>
        <begin position="89"/>
        <end position="109"/>
    </location>
</feature>
<feature type="topological domain" description="Cytoplasmic" evidence="9">
    <location>
        <begin position="110"/>
        <end position="192"/>
    </location>
</feature>
<feature type="intramembrane region" description="Helical" evidence="3">
    <location>
        <begin position="193"/>
        <end position="213"/>
    </location>
</feature>
<feature type="topological domain" description="Cytoplasmic" evidence="9">
    <location>
        <begin position="214"/>
        <end position="415"/>
    </location>
</feature>
<feature type="zinc finger region" description="FYVE-type" evidence="4">
    <location>
        <begin position="348"/>
        <end position="414"/>
    </location>
</feature>
<feature type="region of interest" description="Sufficient for localization to endoplasmic reticulum tubular network and for interactions with REEP1, REEP5, ATL1, ATL2, ATL3 and SPAST" evidence="2">
    <location>
        <begin position="1"/>
        <end position="210"/>
    </location>
</feature>
<feature type="region of interest" description="Sufficient for homooligomerization" evidence="2">
    <location>
        <begin position="1"/>
        <end position="92"/>
    </location>
</feature>
<feature type="region of interest" description="Disordered" evidence="5">
    <location>
        <begin position="1"/>
        <end position="24"/>
    </location>
</feature>
<feature type="region of interest" description="Necessary for interaction with RAB11A and function in neurite outgrowth" evidence="1">
    <location>
        <begin position="51"/>
        <end position="64"/>
    </location>
</feature>
<feature type="region of interest" description="Disordered" evidence="5">
    <location>
        <begin position="254"/>
        <end position="290"/>
    </location>
</feature>
<feature type="region of interest" description="Necessary for interaction with KIF5A" evidence="2">
    <location>
        <begin position="275"/>
        <end position="365"/>
    </location>
</feature>
<feature type="region of interest" description="Necessary for interaction with VAPA" evidence="1">
    <location>
        <begin position="290"/>
        <end position="296"/>
    </location>
</feature>
<feature type="compositionally biased region" description="Acidic residues" evidence="5">
    <location>
        <begin position="280"/>
        <end position="290"/>
    </location>
</feature>
<feature type="binding site" evidence="4">
    <location>
        <position position="354"/>
    </location>
    <ligand>
        <name>Zn(2+)</name>
        <dbReference type="ChEBI" id="CHEBI:29105"/>
        <label>1</label>
    </ligand>
</feature>
<feature type="binding site" evidence="4">
    <location>
        <position position="357"/>
    </location>
    <ligand>
        <name>Zn(2+)</name>
        <dbReference type="ChEBI" id="CHEBI:29105"/>
        <label>1</label>
    </ligand>
</feature>
<feature type="binding site" evidence="4">
    <location>
        <position position="370"/>
    </location>
    <ligand>
        <name>Zn(2+)</name>
        <dbReference type="ChEBI" id="CHEBI:29105"/>
        <label>2</label>
    </ligand>
</feature>
<feature type="binding site" evidence="4">
    <location>
        <position position="373"/>
    </location>
    <ligand>
        <name>Zn(2+)</name>
        <dbReference type="ChEBI" id="CHEBI:29105"/>
        <label>2</label>
    </ligand>
</feature>
<feature type="binding site" evidence="4">
    <location>
        <position position="378"/>
    </location>
    <ligand>
        <name>Zn(2+)</name>
        <dbReference type="ChEBI" id="CHEBI:29105"/>
        <label>1</label>
    </ligand>
</feature>
<feature type="binding site" evidence="4">
    <location>
        <position position="381"/>
    </location>
    <ligand>
        <name>Zn(2+)</name>
        <dbReference type="ChEBI" id="CHEBI:29105"/>
        <label>1</label>
    </ligand>
</feature>
<feature type="binding site" evidence="4">
    <location>
        <position position="406"/>
    </location>
    <ligand>
        <name>Zn(2+)</name>
        <dbReference type="ChEBI" id="CHEBI:29105"/>
        <label>2</label>
    </ligand>
</feature>
<feature type="binding site" evidence="4">
    <location>
        <position position="409"/>
    </location>
    <ligand>
        <name>Zn(2+)</name>
        <dbReference type="ChEBI" id="CHEBI:29105"/>
        <label>2</label>
    </ligand>
</feature>
<feature type="splice variant" id="VSP_019757" description="In isoform 2." evidence="10 11">
    <location>
        <begin position="297"/>
        <end position="303"/>
    </location>
</feature>
<feature type="sequence conflict" description="In Ref. 1; BAE34791." evidence="12" ref="1">
    <original>V</original>
    <variation>A</variation>
    <location>
        <position position="41"/>
    </location>
</feature>
<comment type="function">
    <text evidence="2 7 8">Key regulator of RAB11-dependent vesicular trafficking during neurite extension through polarized membrane transport (By similarity). Promotes axonal elongation and contributes to the establishment of neuronal cell polarity (PubMed:24251978). Involved in nerve growth factor-induced neurite formation in VAPA-dependent manner. Contributes to both the formation and stabilization of the tubular ER network. Involved in ER morphogenesis by regulating the sheet-to-tubule balance and possibly the density of tubule interconnections (By similarity). Acts as an adapter protein that facilitates the interaction of KIF5A with VAPA, VAPB, SURF4, RAB11A, RAB11B and RTN3 and the ZFYVE27-KIF5A complex contributes to the transport of these proteins in neurons. Can induce formation of neurite-like membrane protrusions in non-neuronal cells in a KIF5A/B-dependent manner (PubMed:21976701).</text>
</comment>
<comment type="subunit">
    <text evidence="2 7 8 9">Can form homooligomers (monomers, dimers and tetramers) (By similarity). Interacts with RAB11A (GDP-bound form); regulates RAB11A (PubMed:21976701). Interacts with FKBP8; may negatively regulate ZFYVE27 phosphorylation (By similarity). Isoform 1 interacts to a greater extent than isoform 2 with VAPB (via MSP domain). Isoform 1 interacts to a greater extent than isoform 2 with VAPA (via MSP domain) (PubMed:24251978). Interaction with VAPA may regulate ZFYVE27 retention in the endoplasmic reticulum and its function in cell projections formation. Interacts with ATL2, ATL3, SPAST and RTN3 (By similarity). Interacts with REEP1, REEP5 and ATL1 (PubMed:24668814). Interacts with RAB11B (GDP-bound form), SURF4, KIF5B and KIF5C (PubMed:21976701). Isoform 1 and 2 interact with KIFA (PubMed:21976701, PubMed:24251978).</text>
</comment>
<comment type="subcellular location">
    <subcellularLocation>
        <location evidence="13">Recycling endosome membrane</location>
        <topology evidence="13">Multi-pass membrane protein</topology>
    </subcellularLocation>
    <subcellularLocation>
        <location evidence="9">Endoplasmic reticulum membrane</location>
        <topology evidence="9">Multi-pass membrane protein</topology>
    </subcellularLocation>
    <subcellularLocation>
        <location evidence="6">Cell projection</location>
        <location evidence="6">Growth cone membrane</location>
        <topology evidence="3">Multi-pass membrane protein</topology>
    </subcellularLocation>
    <text evidence="6 9">Localizes at both dendrites and axons (PubMed:17082457). Localizes to endoplasmic reticulum tubular network.</text>
</comment>
<comment type="alternative products">
    <event type="alternative splicing"/>
    <isoform>
        <id>Q3TXX3-1</id>
        <name>1</name>
        <name evidence="11">Protrudin-L</name>
        <sequence type="displayed"/>
    </isoform>
    <isoform>
        <id>Q3TXX3-2</id>
        <name>2</name>
        <name evidence="11">Protrudin-S</name>
        <sequence type="described" ref="VSP_019757"/>
    </isoform>
</comment>
<comment type="tissue specificity">
    <text evidence="6 8">Astrocytes express both isoform 1 and isoform 2 and oligodendrocytes express only isoform 2 (at protein level). Isoform 1 is expressed specifically in the central nervous system and selectively in neuronal cells. Isoform 2 is expressed in cerebrum, cerebellum, spinal cord, heart, thymus, spleen, intestine and lung.</text>
</comment>
<comment type="PTM">
    <text evidence="14">Phosphorylated. Phosphorylation is induced by NGF through the MAPK/ERK pathway and modulates interaction with RAB11A (Probable).</text>
</comment>
<comment type="sequence caution" evidence="12">
    <conflict type="erroneous initiation">
        <sequence resource="EMBL-CDS" id="AAH42595"/>
    </conflict>
    <text>Truncated N-terminus.</text>
</comment>
<evidence type="ECO:0000250" key="1"/>
<evidence type="ECO:0000250" key="2">
    <source>
        <dbReference type="UniProtKB" id="Q5T4F4"/>
    </source>
</evidence>
<evidence type="ECO:0000255" key="3"/>
<evidence type="ECO:0000255" key="4">
    <source>
        <dbReference type="PROSITE-ProRule" id="PRU00091"/>
    </source>
</evidence>
<evidence type="ECO:0000256" key="5">
    <source>
        <dbReference type="SAM" id="MobiDB-lite"/>
    </source>
</evidence>
<evidence type="ECO:0000269" key="6">
    <source>
    </source>
</evidence>
<evidence type="ECO:0000269" key="7">
    <source>
    </source>
</evidence>
<evidence type="ECO:0000269" key="8">
    <source>
    </source>
</evidence>
<evidence type="ECO:0000269" key="9">
    <source>
    </source>
</evidence>
<evidence type="ECO:0000303" key="10">
    <source>
    </source>
</evidence>
<evidence type="ECO:0000303" key="11">
    <source>
    </source>
</evidence>
<evidence type="ECO:0000305" key="12"/>
<evidence type="ECO:0000305" key="13">
    <source>
    </source>
</evidence>
<evidence type="ECO:0000305" key="14">
    <source>
    </source>
</evidence>
<name>ZFY27_MOUSE</name>